<sequence>MITNTKLDPIETASVDELQALQTQRLKWTLKHAYENVPMYRRKFDAAGVHPDDFRELSDLRKFPCTTKQDLRDNYPFDTFAVPMEQVVRIHASSGTTGKPTVVGYTQNDIDNWANIVARSLRAAGGSPKDKIHVAYGYGLFTGGLGAHYGAERLGATVIPMSGGQTEKQAQLIRDFQPDMIMVTPSYCLNLIEELERQLGGDASGCSLRVGVFGAEPWTQAMRKEIERRLGITALDIYGLSEVMGPGVAMECLETTDGPTIWEDHFYPEIVNPHDGTPLADGEHGELLFTTLTKEALPVIRYRTRDLTRLLPGTARTMRRMDRISGRSDDMLIIRGVNVFPSQLEEEIVKFEHLSPHYQLEVNRRGHLDSLSVKVELKESSLTLTHEQRCQVCHQLRHRIKSMVGISTDVMIVNCGSIPRSEGKACRVFDLRNIVGA</sequence>
<dbReference type="EC" id="6.2.1.30" evidence="4"/>
<dbReference type="EMBL" id="X97452">
    <property type="protein sequence ID" value="CAA66100.1"/>
    <property type="status" value="ALT_INIT"/>
    <property type="molecule type" value="Genomic_DNA"/>
</dbReference>
<dbReference type="EMBL" id="U00096">
    <property type="protein sequence ID" value="AAC74480.1"/>
    <property type="molecule type" value="Genomic_DNA"/>
</dbReference>
<dbReference type="EMBL" id="AP009048">
    <property type="protein sequence ID" value="BAE76428.1"/>
    <property type="molecule type" value="Genomic_DNA"/>
</dbReference>
<dbReference type="PIR" id="A64891">
    <property type="entry name" value="A64891"/>
</dbReference>
<dbReference type="RefSeq" id="NP_415916.1">
    <property type="nucleotide sequence ID" value="NC_000913.3"/>
</dbReference>
<dbReference type="RefSeq" id="WP_000632280.1">
    <property type="nucleotide sequence ID" value="NZ_SSZK01000012.1"/>
</dbReference>
<dbReference type="SMR" id="P76085"/>
<dbReference type="BioGRID" id="4263013">
    <property type="interactions" value="319"/>
</dbReference>
<dbReference type="DIP" id="DIP-10430N"/>
<dbReference type="FunCoup" id="P76085">
    <property type="interactions" value="49"/>
</dbReference>
<dbReference type="STRING" id="511145.b1398"/>
<dbReference type="PaxDb" id="511145-b1398"/>
<dbReference type="EnsemblBacteria" id="AAC74480">
    <property type="protein sequence ID" value="AAC74480"/>
    <property type="gene ID" value="b1398"/>
</dbReference>
<dbReference type="GeneID" id="945963"/>
<dbReference type="KEGG" id="ecj:JW5218"/>
<dbReference type="KEGG" id="eco:b1398"/>
<dbReference type="KEGG" id="ecoc:C3026_08155"/>
<dbReference type="PATRIC" id="fig|1411691.4.peg.873"/>
<dbReference type="EchoBASE" id="EB3508"/>
<dbReference type="eggNOG" id="COG1541">
    <property type="taxonomic scope" value="Bacteria"/>
</dbReference>
<dbReference type="HOGENOM" id="CLU_035301_1_1_6"/>
<dbReference type="InParanoid" id="P76085"/>
<dbReference type="OMA" id="GVAPHFQ"/>
<dbReference type="OrthoDB" id="580775at2"/>
<dbReference type="PhylomeDB" id="P76085"/>
<dbReference type="BioCyc" id="EcoCyc:G6719-MONOMER"/>
<dbReference type="UniPathway" id="UPA00930"/>
<dbReference type="PRO" id="PR:P76085"/>
<dbReference type="Proteomes" id="UP000000625">
    <property type="component" value="Chromosome"/>
</dbReference>
<dbReference type="GO" id="GO:0005524">
    <property type="term" value="F:ATP binding"/>
    <property type="evidence" value="ECO:0007669"/>
    <property type="project" value="UniProtKB-KW"/>
</dbReference>
<dbReference type="GO" id="GO:0016405">
    <property type="term" value="F:CoA-ligase activity"/>
    <property type="evidence" value="ECO:0000315"/>
    <property type="project" value="EcoliWiki"/>
</dbReference>
<dbReference type="GO" id="GO:0047475">
    <property type="term" value="F:phenylacetate-CoA ligase activity"/>
    <property type="evidence" value="ECO:0000315"/>
    <property type="project" value="EcoliWiki"/>
</dbReference>
<dbReference type="GO" id="GO:0010124">
    <property type="term" value="P:phenylacetate catabolic process"/>
    <property type="evidence" value="ECO:0000315"/>
    <property type="project" value="UniProtKB"/>
</dbReference>
<dbReference type="CDD" id="cd05913">
    <property type="entry name" value="PaaK"/>
    <property type="match status" value="1"/>
</dbReference>
<dbReference type="FunFam" id="3.30.300.30:FF:000019">
    <property type="entry name" value="Phenylacetate-coenzyme A ligase"/>
    <property type="match status" value="1"/>
</dbReference>
<dbReference type="FunFam" id="3.40.50.12780:FF:000016">
    <property type="entry name" value="Phenylacetate-coenzyme A ligase"/>
    <property type="match status" value="1"/>
</dbReference>
<dbReference type="Gene3D" id="3.30.300.30">
    <property type="match status" value="1"/>
</dbReference>
<dbReference type="Gene3D" id="3.40.50.12780">
    <property type="entry name" value="N-terminal domain of ligase-like"/>
    <property type="match status" value="1"/>
</dbReference>
<dbReference type="InterPro" id="IPR051414">
    <property type="entry name" value="Adenylate-forming_Reductase"/>
</dbReference>
<dbReference type="InterPro" id="IPR045851">
    <property type="entry name" value="AMP-bd_C_sf"/>
</dbReference>
<dbReference type="InterPro" id="IPR028154">
    <property type="entry name" value="AMP-dep_Lig_C"/>
</dbReference>
<dbReference type="InterPro" id="IPR000873">
    <property type="entry name" value="AMP-dep_synth/lig_dom"/>
</dbReference>
<dbReference type="InterPro" id="IPR042099">
    <property type="entry name" value="ANL_N_sf"/>
</dbReference>
<dbReference type="InterPro" id="IPR049623">
    <property type="entry name" value="PA_CoA_lig_proteobact_actino"/>
</dbReference>
<dbReference type="InterPro" id="IPR011880">
    <property type="entry name" value="PA_CoA_ligase"/>
</dbReference>
<dbReference type="NCBIfam" id="TIGR02155">
    <property type="entry name" value="PA_CoA_ligase"/>
    <property type="match status" value="1"/>
</dbReference>
<dbReference type="PANTHER" id="PTHR43439">
    <property type="entry name" value="PHENYLACETATE-COENZYME A LIGASE"/>
    <property type="match status" value="1"/>
</dbReference>
<dbReference type="PANTHER" id="PTHR43439:SF1">
    <property type="entry name" value="PHENYLACETATE-COENZYME A LIGASE"/>
    <property type="match status" value="1"/>
</dbReference>
<dbReference type="Pfam" id="PF00501">
    <property type="entry name" value="AMP-binding"/>
    <property type="match status" value="1"/>
</dbReference>
<dbReference type="Pfam" id="PF14535">
    <property type="entry name" value="AMP-binding_C_2"/>
    <property type="match status" value="1"/>
</dbReference>
<dbReference type="PIRSF" id="PIRSF006444">
    <property type="entry name" value="PaaK"/>
    <property type="match status" value="1"/>
</dbReference>
<dbReference type="SUPFAM" id="SSF56801">
    <property type="entry name" value="Acetyl-CoA synthetase-like"/>
    <property type="match status" value="1"/>
</dbReference>
<feature type="chain" id="PRO_0000058164" description="Phenylacetate-coenzyme A ligase">
    <location>
        <begin position="1"/>
        <end position="437"/>
    </location>
</feature>
<feature type="sequence variant" description="In strain: W.">
    <original>S</original>
    <variation>T</variation>
    <location>
        <position position="127"/>
    </location>
</feature>
<comment type="function">
    <text evidence="3 4">Catalyzes the activation of phenylacetic acid (PA) to phenylacetyl-CoA (PA-CoA).</text>
</comment>
<comment type="catalytic activity">
    <reaction evidence="4">
        <text>2-phenylacetate + ATP + CoA = phenylacetyl-CoA + AMP + diphosphate</text>
        <dbReference type="Rhea" id="RHEA:20956"/>
        <dbReference type="ChEBI" id="CHEBI:18401"/>
        <dbReference type="ChEBI" id="CHEBI:30616"/>
        <dbReference type="ChEBI" id="CHEBI:33019"/>
        <dbReference type="ChEBI" id="CHEBI:57287"/>
        <dbReference type="ChEBI" id="CHEBI:57390"/>
        <dbReference type="ChEBI" id="CHEBI:456215"/>
        <dbReference type="EC" id="6.2.1.30"/>
    </reaction>
    <physiologicalReaction direction="left-to-right" evidence="4">
        <dbReference type="Rhea" id="RHEA:20957"/>
    </physiologicalReaction>
</comment>
<comment type="pathway">
    <text evidence="4">Aromatic compound metabolism; phenylacetate degradation.</text>
</comment>
<comment type="subunit">
    <text evidence="1">Monomer.</text>
</comment>
<comment type="induction">
    <text evidence="2 4">Activated by cAMP receptor protein (CRP), integration host factor (IHF) and by phenylacetyl-coenzyme A that prevents PaaX from binding its target sequences. Inhibited by PaaX.</text>
</comment>
<comment type="similarity">
    <text evidence="5">Belongs to the phenylacetyl-CoA ligase family.</text>
</comment>
<comment type="sequence caution" evidence="5">
    <conflict type="erroneous initiation">
        <sequence resource="EMBL-CDS" id="CAA66100"/>
    </conflict>
    <text>Extended N-terminus.</text>
</comment>
<keyword id="KW-0067">ATP-binding</keyword>
<keyword id="KW-0903">Direct protein sequencing</keyword>
<keyword id="KW-0436">Ligase</keyword>
<keyword id="KW-0547">Nucleotide-binding</keyword>
<keyword id="KW-1185">Reference proteome</keyword>
<proteinExistence type="evidence at protein level"/>
<gene>
    <name type="primary">paaK</name>
    <name type="ordered locus">b1398</name>
    <name type="ordered locus">JW5218</name>
</gene>
<protein>
    <recommendedName>
        <fullName>Phenylacetate-coenzyme A ligase</fullName>
        <ecNumber evidence="4">6.2.1.30</ecNumber>
    </recommendedName>
    <alternativeName>
        <fullName>Phenylacetyl-CoA ligase</fullName>
        <shortName>PA-CoA ligase</shortName>
    </alternativeName>
</protein>
<reference key="1">
    <citation type="journal article" date="1998" name="J. Biol. Chem.">
        <title>Catabolism of phenylacetic acid in Escherichia coli. Characterization of a new aerobic hybrid pathway.</title>
        <authorList>
            <person name="Ferrandez A."/>
            <person name="Minambres B."/>
            <person name="Garcia B."/>
            <person name="Olivera E.R."/>
            <person name="Luengo J.M."/>
            <person name="Garcia J.L."/>
            <person name="Diaz E."/>
        </authorList>
    </citation>
    <scope>NUCLEOTIDE SEQUENCE [GENOMIC DNA]</scope>
    <scope>PROTEIN SEQUENCE OF 1-6</scope>
    <scope>FUNCTION</scope>
    <scope>CATALYTIC ACTIVITY</scope>
    <scope>PATHWAY</scope>
    <scope>INDUCTION</scope>
    <source>
        <strain>W / ATCC 11105 / DSM 1900</strain>
    </source>
</reference>
<reference key="2">
    <citation type="journal article" date="1997" name="Science">
        <title>The complete genome sequence of Escherichia coli K-12.</title>
        <authorList>
            <person name="Blattner F.R."/>
            <person name="Plunkett G. III"/>
            <person name="Bloch C.A."/>
            <person name="Perna N.T."/>
            <person name="Burland V."/>
            <person name="Riley M."/>
            <person name="Collado-Vides J."/>
            <person name="Glasner J.D."/>
            <person name="Rode C.K."/>
            <person name="Mayhew G.F."/>
            <person name="Gregor J."/>
            <person name="Davis N.W."/>
            <person name="Kirkpatrick H.A."/>
            <person name="Goeden M.A."/>
            <person name="Rose D.J."/>
            <person name="Mau B."/>
            <person name="Shao Y."/>
        </authorList>
    </citation>
    <scope>NUCLEOTIDE SEQUENCE [LARGE SCALE GENOMIC DNA]</scope>
    <source>
        <strain>K12 / MG1655 / ATCC 47076</strain>
    </source>
</reference>
<reference key="3">
    <citation type="journal article" date="2006" name="Mol. Syst. Biol.">
        <title>Highly accurate genome sequences of Escherichia coli K-12 strains MG1655 and W3110.</title>
        <authorList>
            <person name="Hayashi K."/>
            <person name="Morooka N."/>
            <person name="Yamamoto Y."/>
            <person name="Fujita K."/>
            <person name="Isono K."/>
            <person name="Choi S."/>
            <person name="Ohtsubo E."/>
            <person name="Baba T."/>
            <person name="Wanner B.L."/>
            <person name="Mori H."/>
            <person name="Horiuchi T."/>
        </authorList>
    </citation>
    <scope>NUCLEOTIDE SEQUENCE [LARGE SCALE GENOMIC DNA]</scope>
    <source>
        <strain>K12 / W3110 / ATCC 27325 / DSM 5911</strain>
    </source>
</reference>
<reference key="4">
    <citation type="journal article" date="2000" name="J. Biol. Chem.">
        <title>Transcriptional regulation of the divergent paa catabolic operons for phenylacetic acid degradation in Escherichia coli.</title>
        <authorList>
            <person name="Ferrandez A."/>
            <person name="Garcia J.L."/>
            <person name="Diaz E."/>
        </authorList>
    </citation>
    <scope>TRANSCRIPTIONAL REGULATION</scope>
</reference>
<reference key="5">
    <citation type="journal article" date="2010" name="Proc. Natl. Acad. Sci. U.S.A.">
        <title>Bacterial phenylalanine and phenylacetate catabolic pathway revealed.</title>
        <authorList>
            <person name="Teufel R."/>
            <person name="Mascaraque V."/>
            <person name="Ismail W."/>
            <person name="Voss M."/>
            <person name="Perera J."/>
            <person name="Eisenreich W."/>
            <person name="Haehnel W."/>
            <person name="Fuchs G."/>
        </authorList>
    </citation>
    <scope>FUNCTION AS A PHENYLACETATE-COENZYME A LIGASE</scope>
</reference>
<accession>P76085</accession>
<accession>O53018</accession>
<accession>Q2MBC8</accession>
<organism>
    <name type="scientific">Escherichia coli (strain K12)</name>
    <dbReference type="NCBI Taxonomy" id="83333"/>
    <lineage>
        <taxon>Bacteria</taxon>
        <taxon>Pseudomonadati</taxon>
        <taxon>Pseudomonadota</taxon>
        <taxon>Gammaproteobacteria</taxon>
        <taxon>Enterobacterales</taxon>
        <taxon>Enterobacteriaceae</taxon>
        <taxon>Escherichia</taxon>
    </lineage>
</organism>
<name>PAAK_ECOLI</name>
<evidence type="ECO:0000250" key="1"/>
<evidence type="ECO:0000269" key="2">
    <source>
    </source>
</evidence>
<evidence type="ECO:0000269" key="3">
    <source>
    </source>
</evidence>
<evidence type="ECO:0000269" key="4">
    <source>
    </source>
</evidence>
<evidence type="ECO:0000305" key="5"/>